<organismHost>
    <name type="scientific">Bos taurus</name>
    <name type="common">Bovine</name>
    <dbReference type="NCBI Taxonomy" id="9913"/>
</organismHost>
<organismHost>
    <name type="scientific">Felis catus</name>
    <name type="common">Cat</name>
    <name type="synonym">Felis silvestris catus</name>
    <dbReference type="NCBI Taxonomy" id="9685"/>
</organismHost>
<organismHost>
    <name type="scientific">Homo sapiens</name>
    <name type="common">Human</name>
    <dbReference type="NCBI Taxonomy" id="9606"/>
</organismHost>
<organismHost>
    <name type="scientific">Loxodonta africana</name>
    <name type="common">African elephant</name>
    <dbReference type="NCBI Taxonomy" id="9785"/>
</organismHost>
<organismHost>
    <name type="scientific">Microtus agrestis</name>
    <name type="common">Short-tailed field vole</name>
    <dbReference type="NCBI Taxonomy" id="29092"/>
</organismHost>
<organismHost>
    <name type="scientific">Mus musculus</name>
    <name type="common">Mouse</name>
    <dbReference type="NCBI Taxonomy" id="10090"/>
</organismHost>
<organismHost>
    <name type="scientific">Myodes glareolus</name>
    <name type="common">Bank vole</name>
    <name type="synonym">Clethrionomys glareolus</name>
    <dbReference type="NCBI Taxonomy" id="447135"/>
</organismHost>
<name>VHR2_CWPXG</name>
<gene>
    <name type="ORF">C4L</name>
</gene>
<reference key="1">
    <citation type="journal article" date="1996" name="Dokl. Akad. Nauk">
        <title>Genes of a circle of hosts for the cowpox virus.</title>
        <authorList>
            <person name="Safronov P.F."/>
            <person name="Petrov N.A."/>
            <person name="Riazankina O.I."/>
            <person name="Totmenin A.V."/>
            <person name="Shchelkunov S.N."/>
            <person name="Sandakhchiev L.S."/>
        </authorList>
    </citation>
    <scope>NUCLEOTIDE SEQUENCE [GENOMIC DNA]</scope>
</reference>
<reference key="2">
    <citation type="journal article" date="1998" name="Virology">
        <title>The genomic sequence analysis of the left and right species-specific terminal region of a cowpox virus strain reveals unique sequences and a cluster of intact ORFs for immunomodulatory and host range proteins.</title>
        <authorList>
            <person name="Shchelkunov S.N."/>
            <person name="Safronov P.F."/>
            <person name="Totmenin A.V."/>
            <person name="Petrov N.A."/>
            <person name="Ryazankina O.I."/>
            <person name="Gutorov V.V."/>
            <person name="Kotwal G.J."/>
        </authorList>
    </citation>
    <scope>NUCLEOTIDE SEQUENCE [GENOMIC DNA]</scope>
</reference>
<reference key="3">
    <citation type="journal article" date="2000" name="Mol. Biol. (Mosk.)">
        <title>Structural-functional organization of Cowpox virus GRI-90 genome. I. Isolation of clones of DNA fragments of complete Cowpox virus genome.</title>
        <authorList>
            <person name="Riazankina O.I."/>
            <person name="Tumanova O.I.U."/>
            <person name="Kolosova I.V."/>
            <person name="Safronov P.F."/>
            <person name="Kablova G.V."/>
            <person name="Riazankin I.A."/>
            <person name="Shchelkunov S.N."/>
        </authorList>
    </citation>
    <scope>NUCLEOTIDE SEQUENCE [GENOMIC DNA]</scope>
</reference>
<sequence length="170" mass="19935">MHVFYAVIDNTIDLECLTLHKGVEYGCKLQLISKNTKTVNIKCITEVYYSDHLLKPLMAYVNDKLIQLDRKKLRHKIVYSIDLTLYDEVTNMLVCSNMDPDLIDRYYAKICLDFDNNVYTVKDKNYTNAVIEYPVVCNFRRYSESDSDSDVDDRAELHKRNNDSDSDDYT</sequence>
<protein>
    <recommendedName>
        <fullName>Probable host range protein 2</fullName>
    </recommendedName>
</protein>
<accession>P87604</accession>
<feature type="chain" id="PRO_0000099393" description="Probable host range protein 2">
    <location>
        <begin position="1"/>
        <end position="170"/>
    </location>
</feature>
<feature type="region of interest" description="Disordered" evidence="2">
    <location>
        <begin position="145"/>
        <end position="170"/>
    </location>
</feature>
<feature type="compositionally biased region" description="Basic and acidic residues" evidence="2">
    <location>
        <begin position="152"/>
        <end position="163"/>
    </location>
</feature>
<organism>
    <name type="scientific">Cowpox virus (strain GRI-90 / Grishak)</name>
    <name type="common">CPV</name>
    <dbReference type="NCBI Taxonomy" id="265871"/>
    <lineage>
        <taxon>Viruses</taxon>
        <taxon>Varidnaviria</taxon>
        <taxon>Bamfordvirae</taxon>
        <taxon>Nucleocytoviricota</taxon>
        <taxon>Pokkesviricetes</taxon>
        <taxon>Chitovirales</taxon>
        <taxon>Poxviridae</taxon>
        <taxon>Chordopoxvirinae</taxon>
        <taxon>Orthopoxvirus</taxon>
        <taxon>Cowpox virus</taxon>
    </lineage>
</organism>
<comment type="function">
    <text evidence="1">Plays a role for multiplication of the virus in different cell types.</text>
</comment>
<comment type="similarity">
    <text evidence="3">Belongs to the poxviridae C7 protein family.</text>
</comment>
<comment type="caution">
    <text evidence="3">PubMed:8963248 erroneously termed the gene for this protein 'D4L'.</text>
</comment>
<proteinExistence type="inferred from homology"/>
<evidence type="ECO:0000250" key="1"/>
<evidence type="ECO:0000256" key="2">
    <source>
        <dbReference type="SAM" id="MobiDB-lite"/>
    </source>
</evidence>
<evidence type="ECO:0000305" key="3"/>
<dbReference type="EMBL" id="X94355">
    <property type="protein sequence ID" value="CAD90593.1"/>
    <property type="molecule type" value="Genomic_DNA"/>
</dbReference>
<dbReference type="SMR" id="P87604"/>
<dbReference type="Proteomes" id="UP000137384">
    <property type="component" value="Segment"/>
</dbReference>
<dbReference type="GO" id="GO:0016032">
    <property type="term" value="P:viral process"/>
    <property type="evidence" value="ECO:0007669"/>
    <property type="project" value="InterPro"/>
</dbReference>
<dbReference type="InterPro" id="IPR004967">
    <property type="entry name" value="Poxvirus_C7/F8A"/>
</dbReference>
<dbReference type="Pfam" id="PF03287">
    <property type="entry name" value="Pox_C7_F8A"/>
    <property type="match status" value="1"/>
</dbReference>